<evidence type="ECO:0000250" key="1">
    <source>
        <dbReference type="UniProtKB" id="Q9NV64"/>
    </source>
</evidence>
<evidence type="ECO:0000255" key="2"/>
<evidence type="ECO:0000305" key="3"/>
<dbReference type="EMBL" id="BC056707">
    <property type="protein sequence ID" value="AAH56707.1"/>
    <property type="molecule type" value="mRNA"/>
</dbReference>
<dbReference type="RefSeq" id="NP_955926.1">
    <property type="nucleotide sequence ID" value="NM_199632.1"/>
</dbReference>
<dbReference type="FunCoup" id="Q6PH58">
    <property type="interactions" value="1951"/>
</dbReference>
<dbReference type="STRING" id="7955.ENSDARP00000139614"/>
<dbReference type="PaxDb" id="7955-ENSDARP00000105757"/>
<dbReference type="GeneID" id="323208"/>
<dbReference type="KEGG" id="dre:323208"/>
<dbReference type="AGR" id="ZFIN:ZDB-GENE-030131-1928"/>
<dbReference type="CTD" id="55254"/>
<dbReference type="ZFIN" id="ZDB-GENE-030131-1928">
    <property type="gene designation" value="tmem39a"/>
</dbReference>
<dbReference type="eggNOG" id="KOG3828">
    <property type="taxonomic scope" value="Eukaryota"/>
</dbReference>
<dbReference type="InParanoid" id="Q6PH58"/>
<dbReference type="OrthoDB" id="5862608at2759"/>
<dbReference type="PhylomeDB" id="Q6PH58"/>
<dbReference type="PRO" id="PR:Q6PH58"/>
<dbReference type="Proteomes" id="UP000000437">
    <property type="component" value="Chromosome 1"/>
</dbReference>
<dbReference type="GO" id="GO:0005789">
    <property type="term" value="C:endoplasmic reticulum membrane"/>
    <property type="evidence" value="ECO:0000250"/>
    <property type="project" value="UniProtKB"/>
</dbReference>
<dbReference type="GO" id="GO:0006914">
    <property type="term" value="P:autophagy"/>
    <property type="evidence" value="ECO:0007669"/>
    <property type="project" value="UniProtKB-KW"/>
</dbReference>
<dbReference type="GO" id="GO:0070417">
    <property type="term" value="P:cellular response to cold"/>
    <property type="evidence" value="ECO:0000315"/>
    <property type="project" value="ZFIN"/>
</dbReference>
<dbReference type="GO" id="GO:1902902">
    <property type="term" value="P:negative regulation of autophagosome assembly"/>
    <property type="evidence" value="ECO:0000250"/>
    <property type="project" value="UniProtKB"/>
</dbReference>
<dbReference type="GO" id="GO:1901097">
    <property type="term" value="P:negative regulation of autophagosome maturation"/>
    <property type="evidence" value="ECO:0000250"/>
    <property type="project" value="UniProtKB"/>
</dbReference>
<dbReference type="GO" id="GO:0009409">
    <property type="term" value="P:response to cold"/>
    <property type="evidence" value="ECO:0000315"/>
    <property type="project" value="ZFIN"/>
</dbReference>
<dbReference type="InterPro" id="IPR019397">
    <property type="entry name" value="Uncharacterised_TMEM39"/>
</dbReference>
<dbReference type="PANTHER" id="PTHR12995">
    <property type="entry name" value="FI21814P1"/>
    <property type="match status" value="1"/>
</dbReference>
<dbReference type="PANTHER" id="PTHR12995:SF3">
    <property type="entry name" value="TRANSMEMBRANE PROTEIN 39A"/>
    <property type="match status" value="1"/>
</dbReference>
<dbReference type="Pfam" id="PF10271">
    <property type="entry name" value="Tmp39"/>
    <property type="match status" value="1"/>
</dbReference>
<feature type="chain" id="PRO_0000279227" description="Transmembrane protein 39A">
    <location>
        <begin position="1"/>
        <end position="481"/>
    </location>
</feature>
<feature type="transmembrane region" description="Helical" evidence="2">
    <location>
        <begin position="74"/>
        <end position="94"/>
    </location>
</feature>
<feature type="transmembrane region" description="Helical" evidence="2">
    <location>
        <begin position="109"/>
        <end position="129"/>
    </location>
</feature>
<feature type="transmembrane region" description="Helical" evidence="2">
    <location>
        <begin position="150"/>
        <end position="170"/>
    </location>
</feature>
<feature type="transmembrane region" description="Helical" evidence="2">
    <location>
        <begin position="182"/>
        <end position="202"/>
    </location>
</feature>
<feature type="transmembrane region" description="Helical" evidence="2">
    <location>
        <begin position="278"/>
        <end position="298"/>
    </location>
</feature>
<feature type="transmembrane region" description="Helical" evidence="2">
    <location>
        <begin position="313"/>
        <end position="333"/>
    </location>
</feature>
<feature type="transmembrane region" description="Helical" evidence="2">
    <location>
        <begin position="411"/>
        <end position="431"/>
    </location>
</feature>
<feature type="transmembrane region" description="Helical" evidence="2">
    <location>
        <begin position="437"/>
        <end position="457"/>
    </location>
</feature>
<proteinExistence type="evidence at transcript level"/>
<comment type="function">
    <text evidence="1">Regulates autophagy by controlling the spatial distribution and levels of the intracellular phosphatidylinositol 4-phosphate (PtdIns(4)P) pools (By similarity). Modulates (PtdIns(4)P) levels by regulating the ER-to-Golgi trafficking of the phosphatidylinositide phosphatase SACM1L (By similarity).</text>
</comment>
<comment type="subcellular location">
    <subcellularLocation>
        <location evidence="1">Endoplasmic reticulum membrane</location>
        <topology evidence="2">Multi-pass membrane protein</topology>
    </subcellularLocation>
</comment>
<comment type="similarity">
    <text evidence="3">Belongs to the TMEM39 family.</text>
</comment>
<sequence length="481" mass="54156">MPGGRRGPSRQQLSRSALPSLQTLVGGGLSNGAGLRCRSSSAVGLSAPPLTALITPEPVRHSRIPDLPLDSNLLFETLLLLYLLVALLVQYINIYRTVWWSSYSQPTASTSLNFHLMDAHLAVFIAVMLSRRLVWTLLSEVCVACPASPLCYVLLLVVRVCVLTLCGWVLCWTLLNLFRSHSVLKLLFLGYPFGVYVPLCCLHQDGSPAADCGFADADGADGALLQPRDFLTLLRENLRQQLSGTHTHTHTHTCPPSPELIRSEVQQLKTDFNRRIKEVLFNSLLSAYYVAFLPLCFVKSTQYYDMRWSCEHLIMVWINAFVMLMSHLLPPHYCDLLHRCAAHLGRWQRLEPGSCSNTPQHTWSDSTIWPQGVLVRHSRCLYKAVGPYNVALPSDVSHARFYFLFHKPLRLLNVLIGIECSVVVYQLYSLLRSERWNHTLSLGLILVCNYYVLFKLLRDRLVLGKAYSHPLGSAGLGMKRD</sequence>
<keyword id="KW-0072">Autophagy</keyword>
<keyword id="KW-0256">Endoplasmic reticulum</keyword>
<keyword id="KW-0472">Membrane</keyword>
<keyword id="KW-1185">Reference proteome</keyword>
<keyword id="KW-0812">Transmembrane</keyword>
<keyword id="KW-1133">Transmembrane helix</keyword>
<organism>
    <name type="scientific">Danio rerio</name>
    <name type="common">Zebrafish</name>
    <name type="synonym">Brachydanio rerio</name>
    <dbReference type="NCBI Taxonomy" id="7955"/>
    <lineage>
        <taxon>Eukaryota</taxon>
        <taxon>Metazoa</taxon>
        <taxon>Chordata</taxon>
        <taxon>Craniata</taxon>
        <taxon>Vertebrata</taxon>
        <taxon>Euteleostomi</taxon>
        <taxon>Actinopterygii</taxon>
        <taxon>Neopterygii</taxon>
        <taxon>Teleostei</taxon>
        <taxon>Ostariophysi</taxon>
        <taxon>Cypriniformes</taxon>
        <taxon>Danionidae</taxon>
        <taxon>Danioninae</taxon>
        <taxon>Danio</taxon>
    </lineage>
</organism>
<gene>
    <name type="primary">tmem39a</name>
    <name type="ORF">zgc:65781</name>
</gene>
<reference key="1">
    <citation type="submission" date="2003-08" db="EMBL/GenBank/DDBJ databases">
        <authorList>
            <consortium name="NIH - Zebrafish Gene Collection (ZGC) project"/>
        </authorList>
    </citation>
    <scope>NUCLEOTIDE SEQUENCE [LARGE SCALE MRNA]</scope>
    <source>
        <tissue>Embryo</tissue>
    </source>
</reference>
<name>TM39A_DANRE</name>
<protein>
    <recommendedName>
        <fullName>Transmembrane protein 39A</fullName>
    </recommendedName>
</protein>
<accession>Q6PH58</accession>